<reference key="1">
    <citation type="journal article" date="2006" name="Proc. Natl. Acad. Sci. U.S.A.">
        <title>Burkholderia xenovorans LB400 harbors a multi-replicon, 9.73-Mbp genome shaped for versatility.</title>
        <authorList>
            <person name="Chain P.S.G."/>
            <person name="Denef V.J."/>
            <person name="Konstantinidis K.T."/>
            <person name="Vergez L.M."/>
            <person name="Agullo L."/>
            <person name="Reyes V.L."/>
            <person name="Hauser L."/>
            <person name="Cordova M."/>
            <person name="Gomez L."/>
            <person name="Gonzalez M."/>
            <person name="Land M."/>
            <person name="Lao V."/>
            <person name="Larimer F."/>
            <person name="LiPuma J.J."/>
            <person name="Mahenthiralingam E."/>
            <person name="Malfatti S.A."/>
            <person name="Marx C.J."/>
            <person name="Parnell J.J."/>
            <person name="Ramette A."/>
            <person name="Richardson P."/>
            <person name="Seeger M."/>
            <person name="Smith D."/>
            <person name="Spilker T."/>
            <person name="Sul W.J."/>
            <person name="Tsoi T.V."/>
            <person name="Ulrich L.E."/>
            <person name="Zhulin I.B."/>
            <person name="Tiedje J.M."/>
        </authorList>
    </citation>
    <scope>NUCLEOTIDE SEQUENCE [LARGE SCALE GENOMIC DNA]</scope>
    <source>
        <strain>LB400</strain>
    </source>
</reference>
<name>PHNX_PARXL</name>
<comment type="function">
    <text evidence="1">Involved in phosphonate degradation.</text>
</comment>
<comment type="catalytic activity">
    <reaction evidence="1">
        <text>phosphonoacetaldehyde + H2O = acetaldehyde + phosphate + H(+)</text>
        <dbReference type="Rhea" id="RHEA:18905"/>
        <dbReference type="ChEBI" id="CHEBI:15343"/>
        <dbReference type="ChEBI" id="CHEBI:15377"/>
        <dbReference type="ChEBI" id="CHEBI:15378"/>
        <dbReference type="ChEBI" id="CHEBI:43474"/>
        <dbReference type="ChEBI" id="CHEBI:58383"/>
        <dbReference type="EC" id="3.11.1.1"/>
    </reaction>
</comment>
<comment type="cofactor">
    <cofactor evidence="1">
        <name>Mg(2+)</name>
        <dbReference type="ChEBI" id="CHEBI:18420"/>
    </cofactor>
    <text evidence="1">Binds 1 Mg(2+) ion per subunit.</text>
</comment>
<comment type="subunit">
    <text evidence="1">Homodimer.</text>
</comment>
<comment type="similarity">
    <text evidence="1">Belongs to the HAD-like hydrolase superfamily. PhnX family.</text>
</comment>
<protein>
    <recommendedName>
        <fullName evidence="1">Phosphonoacetaldehyde hydrolase</fullName>
        <shortName evidence="1">Phosphonatase</shortName>
        <ecNumber evidence="1">3.11.1.1</ecNumber>
    </recommendedName>
    <alternativeName>
        <fullName evidence="1">Phosphonoacetaldehyde phosphonohydrolase</fullName>
    </alternativeName>
</protein>
<dbReference type="EC" id="3.11.1.1" evidence="1"/>
<dbReference type="EMBL" id="CP000270">
    <property type="protein sequence ID" value="ABE30851.1"/>
    <property type="molecule type" value="Genomic_DNA"/>
</dbReference>
<dbReference type="RefSeq" id="WP_011488465.1">
    <property type="nucleotide sequence ID" value="NC_007951.1"/>
</dbReference>
<dbReference type="SMR" id="Q13YI8"/>
<dbReference type="STRING" id="266265.Bxe_A2117"/>
<dbReference type="KEGG" id="bxb:DR64_4272"/>
<dbReference type="KEGG" id="bxe:Bxe_A2117"/>
<dbReference type="PATRIC" id="fig|266265.5.peg.2421"/>
<dbReference type="eggNOG" id="COG0637">
    <property type="taxonomic scope" value="Bacteria"/>
</dbReference>
<dbReference type="OrthoDB" id="5504491at2"/>
<dbReference type="Proteomes" id="UP000001817">
    <property type="component" value="Chromosome 1"/>
</dbReference>
<dbReference type="GO" id="GO:0005829">
    <property type="term" value="C:cytosol"/>
    <property type="evidence" value="ECO:0007669"/>
    <property type="project" value="TreeGrafter"/>
</dbReference>
<dbReference type="GO" id="GO:0000287">
    <property type="term" value="F:magnesium ion binding"/>
    <property type="evidence" value="ECO:0007669"/>
    <property type="project" value="UniProtKB-UniRule"/>
</dbReference>
<dbReference type="GO" id="GO:0008967">
    <property type="term" value="F:phosphoglycolate phosphatase activity"/>
    <property type="evidence" value="ECO:0007669"/>
    <property type="project" value="TreeGrafter"/>
</dbReference>
<dbReference type="GO" id="GO:0050194">
    <property type="term" value="F:phosphonoacetaldehyde hydrolase activity"/>
    <property type="evidence" value="ECO:0007669"/>
    <property type="project" value="UniProtKB-UniRule"/>
</dbReference>
<dbReference type="GO" id="GO:0006281">
    <property type="term" value="P:DNA repair"/>
    <property type="evidence" value="ECO:0007669"/>
    <property type="project" value="TreeGrafter"/>
</dbReference>
<dbReference type="GO" id="GO:0019700">
    <property type="term" value="P:organic phosphonate catabolic process"/>
    <property type="evidence" value="ECO:0007669"/>
    <property type="project" value="InterPro"/>
</dbReference>
<dbReference type="CDD" id="cd02586">
    <property type="entry name" value="HAD_PHN"/>
    <property type="match status" value="1"/>
</dbReference>
<dbReference type="FunFam" id="1.10.150.240:FF:000006">
    <property type="entry name" value="Phosphonoacetaldehyde hydrolase"/>
    <property type="match status" value="1"/>
</dbReference>
<dbReference type="Gene3D" id="3.40.50.1000">
    <property type="entry name" value="HAD superfamily/HAD-like"/>
    <property type="match status" value="1"/>
</dbReference>
<dbReference type="Gene3D" id="1.10.150.240">
    <property type="entry name" value="Putative phosphatase, domain 2"/>
    <property type="match status" value="1"/>
</dbReference>
<dbReference type="HAMAP" id="MF_01375">
    <property type="entry name" value="PhnX"/>
    <property type="match status" value="1"/>
</dbReference>
<dbReference type="InterPro" id="IPR050155">
    <property type="entry name" value="HAD-like_hydrolase_sf"/>
</dbReference>
<dbReference type="InterPro" id="IPR036412">
    <property type="entry name" value="HAD-like_sf"/>
</dbReference>
<dbReference type="InterPro" id="IPR023214">
    <property type="entry name" value="HAD_sf"/>
</dbReference>
<dbReference type="InterPro" id="IPR023198">
    <property type="entry name" value="PGP-like_dom2"/>
</dbReference>
<dbReference type="InterPro" id="IPR006323">
    <property type="entry name" value="Phosphonoacetald_hydro"/>
</dbReference>
<dbReference type="NCBIfam" id="TIGR01422">
    <property type="entry name" value="phosphonatase"/>
    <property type="match status" value="1"/>
</dbReference>
<dbReference type="PANTHER" id="PTHR43434">
    <property type="entry name" value="PHOSPHOGLYCOLATE PHOSPHATASE"/>
    <property type="match status" value="1"/>
</dbReference>
<dbReference type="PANTHER" id="PTHR43434:SF19">
    <property type="entry name" value="PHOSPHONOACETALDEHYDE HYDROLASE"/>
    <property type="match status" value="1"/>
</dbReference>
<dbReference type="Pfam" id="PF00702">
    <property type="entry name" value="Hydrolase"/>
    <property type="match status" value="1"/>
</dbReference>
<dbReference type="SFLD" id="SFLDG01129">
    <property type="entry name" value="C1.5:_HAD__Beta-PGM__Phosphata"/>
    <property type="match status" value="1"/>
</dbReference>
<dbReference type="SFLD" id="SFLDS00003">
    <property type="entry name" value="Haloacid_Dehalogenase"/>
    <property type="match status" value="1"/>
</dbReference>
<dbReference type="SUPFAM" id="SSF56784">
    <property type="entry name" value="HAD-like"/>
    <property type="match status" value="1"/>
</dbReference>
<feature type="chain" id="PRO_0000284587" description="Phosphonoacetaldehyde hydrolase">
    <location>
        <begin position="1"/>
        <end position="267"/>
    </location>
</feature>
<feature type="active site" description="Nucleophile" evidence="1">
    <location>
        <position position="10"/>
    </location>
</feature>
<feature type="active site" description="Schiff-base intermediate with substrate" evidence="1">
    <location>
        <position position="51"/>
    </location>
</feature>
<feature type="binding site" evidence="1">
    <location>
        <position position="10"/>
    </location>
    <ligand>
        <name>Mg(2+)</name>
        <dbReference type="ChEBI" id="CHEBI:18420"/>
    </ligand>
</feature>
<feature type="binding site" evidence="1">
    <location>
        <position position="12"/>
    </location>
    <ligand>
        <name>Mg(2+)</name>
        <dbReference type="ChEBI" id="CHEBI:18420"/>
    </ligand>
</feature>
<feature type="binding site" evidence="1">
    <location>
        <position position="184"/>
    </location>
    <ligand>
        <name>Mg(2+)</name>
        <dbReference type="ChEBI" id="CHEBI:18420"/>
    </ligand>
</feature>
<accession>Q13YI8</accession>
<gene>
    <name evidence="1" type="primary">phnX</name>
    <name type="ordered locus">Bxeno_A2313</name>
    <name type="ORF">Bxe_A2117</name>
</gene>
<sequence length="267" mass="28358">MKHVKAVIFDWAGTVVDYGSLAPMGAFVETFGQFGVPITIDEARGPMGMAKRPHIAALMALPRVAQAWTDKYGHAPDDADIDAVYDVFVPKNIAVAASYSSVIPGVADVASALRGDDIRIGTTTGYTREIMAEIVPGAAAQGFSPDSIVCTGDTAEGRPSPYMIYRTLPELGVWRAKEAIKVDDTEVGIEEGINGGTWTVGVSVSGNAFGMAEGDVKALAPDEFAWRRNAAIQKLQAAGAHYVIDSVADLMPVVYDIEARLARGERP</sequence>
<evidence type="ECO:0000255" key="1">
    <source>
        <dbReference type="HAMAP-Rule" id="MF_01375"/>
    </source>
</evidence>
<proteinExistence type="inferred from homology"/>
<organism>
    <name type="scientific">Paraburkholderia xenovorans (strain LB400)</name>
    <dbReference type="NCBI Taxonomy" id="266265"/>
    <lineage>
        <taxon>Bacteria</taxon>
        <taxon>Pseudomonadati</taxon>
        <taxon>Pseudomonadota</taxon>
        <taxon>Betaproteobacteria</taxon>
        <taxon>Burkholderiales</taxon>
        <taxon>Burkholderiaceae</taxon>
        <taxon>Paraburkholderia</taxon>
    </lineage>
</organism>
<keyword id="KW-0378">Hydrolase</keyword>
<keyword id="KW-0460">Magnesium</keyword>
<keyword id="KW-0479">Metal-binding</keyword>
<keyword id="KW-1185">Reference proteome</keyword>
<keyword id="KW-0704">Schiff base</keyword>